<organism>
    <name type="scientific">Neurospora crassa (strain ATCC 24698 / 74-OR23-1A / CBS 708.71 / DSM 1257 / FGSC 987)</name>
    <dbReference type="NCBI Taxonomy" id="367110"/>
    <lineage>
        <taxon>Eukaryota</taxon>
        <taxon>Fungi</taxon>
        <taxon>Dikarya</taxon>
        <taxon>Ascomycota</taxon>
        <taxon>Pezizomycotina</taxon>
        <taxon>Sordariomycetes</taxon>
        <taxon>Sordariomycetidae</taxon>
        <taxon>Sordariales</taxon>
        <taxon>Sordariaceae</taxon>
        <taxon>Neurospora</taxon>
    </lineage>
</organism>
<feature type="transit peptide" description="Mitochondrion" evidence="1">
    <location>
        <begin position="1"/>
        <end position="64"/>
    </location>
</feature>
<feature type="chain" id="PRO_0000043265" description="Small ribosomal subunit protein uS10m">
    <location>
        <begin position="65"/>
        <end position="268"/>
    </location>
</feature>
<keyword id="KW-0002">3D-structure</keyword>
<keyword id="KW-0496">Mitochondrion</keyword>
<keyword id="KW-1185">Reference proteome</keyword>
<keyword id="KW-0687">Ribonucleoprotein</keyword>
<keyword id="KW-0689">Ribosomal protein</keyword>
<keyword id="KW-0809">Transit peptide</keyword>
<sequence>MIIRPVVRSLQGRAPLATLRSAQSVFQPLPQLRRNASVTTGPDAASKASTTPIARITTTTEAPKDQKKAKAAAAAAAEPEEQEVIMSRMPRSLEALYLQPLRREAEYGVPSCDLQLRSYSIRNLEFFCDFALRAAYYLGLPAFGPVPLPRMIERWTVPKSHFIFKKSQENFERVTLRRLIQIKDGHPETVQLWLAFLQKHAYYGIGMKANVWEFSKLGVSKAMDESKSEVEKLLETRWEHLSHVSDMKGVGNFEDFLAKERLRISGGR</sequence>
<dbReference type="EMBL" id="CM002238">
    <property type="protein sequence ID" value="EAA28002.2"/>
    <property type="molecule type" value="Genomic_DNA"/>
</dbReference>
<dbReference type="RefSeq" id="XP_957238.2">
    <property type="nucleotide sequence ID" value="XM_952145.2"/>
</dbReference>
<dbReference type="PDB" id="6YW5">
    <property type="method" value="EM"/>
    <property type="resolution" value="2.85 A"/>
    <property type="chains" value="JJ=1-268"/>
</dbReference>
<dbReference type="PDB" id="6YWX">
    <property type="method" value="EM"/>
    <property type="resolution" value="3.10 A"/>
    <property type="chains" value="JJ=1-268"/>
</dbReference>
<dbReference type="PDBsum" id="6YW5"/>
<dbReference type="PDBsum" id="6YWX"/>
<dbReference type="EMDB" id="EMD-10958"/>
<dbReference type="EMDB" id="EMD-10978"/>
<dbReference type="SMR" id="Q7RYL4"/>
<dbReference type="FunCoup" id="Q7RYL4">
    <property type="interactions" value="235"/>
</dbReference>
<dbReference type="STRING" id="367110.Q7RYL4"/>
<dbReference type="PaxDb" id="5141-EFNCRP00000000103"/>
<dbReference type="EnsemblFungi" id="EAA28002">
    <property type="protein sequence ID" value="EAA28002"/>
    <property type="gene ID" value="NCU00114"/>
</dbReference>
<dbReference type="GeneID" id="3873360"/>
<dbReference type="KEGG" id="ncr:NCU00114"/>
<dbReference type="VEuPathDB" id="FungiDB:NCU00114"/>
<dbReference type="HOGENOM" id="CLU_051208_2_0_1"/>
<dbReference type="InParanoid" id="Q7RYL4"/>
<dbReference type="OrthoDB" id="366214at2759"/>
<dbReference type="Proteomes" id="UP000001805">
    <property type="component" value="Chromosome 3, Linkage Group III"/>
</dbReference>
<dbReference type="GO" id="GO:0005739">
    <property type="term" value="C:mitochondrion"/>
    <property type="evidence" value="ECO:0000318"/>
    <property type="project" value="GO_Central"/>
</dbReference>
<dbReference type="GO" id="GO:0015935">
    <property type="term" value="C:small ribosomal subunit"/>
    <property type="evidence" value="ECO:0000318"/>
    <property type="project" value="GO_Central"/>
</dbReference>
<dbReference type="GO" id="GO:0003735">
    <property type="term" value="F:structural constituent of ribosome"/>
    <property type="evidence" value="ECO:0000318"/>
    <property type="project" value="GO_Central"/>
</dbReference>
<dbReference type="GO" id="GO:0006412">
    <property type="term" value="P:translation"/>
    <property type="evidence" value="ECO:0007669"/>
    <property type="project" value="InterPro"/>
</dbReference>
<dbReference type="FunFam" id="3.30.70.600:FF:000003">
    <property type="entry name" value="30S ribosomal protein S10"/>
    <property type="match status" value="1"/>
</dbReference>
<dbReference type="Gene3D" id="3.30.70.600">
    <property type="entry name" value="Ribosomal protein S10 domain"/>
    <property type="match status" value="1"/>
</dbReference>
<dbReference type="HAMAP" id="MF_00508">
    <property type="entry name" value="Ribosomal_uS10"/>
    <property type="match status" value="1"/>
</dbReference>
<dbReference type="InterPro" id="IPR001848">
    <property type="entry name" value="Ribosomal_uS10"/>
</dbReference>
<dbReference type="InterPro" id="IPR027486">
    <property type="entry name" value="Ribosomal_uS10_dom"/>
</dbReference>
<dbReference type="InterPro" id="IPR036838">
    <property type="entry name" value="Ribosomal_uS10_dom_sf"/>
</dbReference>
<dbReference type="PANTHER" id="PTHR11700">
    <property type="entry name" value="30S RIBOSOMAL PROTEIN S10 FAMILY MEMBER"/>
    <property type="match status" value="1"/>
</dbReference>
<dbReference type="Pfam" id="PF00338">
    <property type="entry name" value="Ribosomal_S10"/>
    <property type="match status" value="1"/>
</dbReference>
<dbReference type="SMART" id="SM01403">
    <property type="entry name" value="Ribosomal_S10"/>
    <property type="match status" value="1"/>
</dbReference>
<dbReference type="SUPFAM" id="SSF54999">
    <property type="entry name" value="Ribosomal protein S10"/>
    <property type="match status" value="1"/>
</dbReference>
<evidence type="ECO:0000255" key="1"/>
<evidence type="ECO:0000269" key="2">
    <source>
    </source>
</evidence>
<evidence type="ECO:0000303" key="3">
    <source>
    </source>
</evidence>
<evidence type="ECO:0000305" key="4"/>
<evidence type="ECO:0000305" key="5">
    <source>
    </source>
</evidence>
<evidence type="ECO:0007744" key="6">
    <source>
        <dbReference type="PDB" id="6YW5"/>
    </source>
</evidence>
<evidence type="ECO:0007744" key="7">
    <source>
        <dbReference type="PDB" id="6YWX"/>
    </source>
</evidence>
<gene>
    <name type="primary">mrp-10</name>
    <name type="synonym">rsm10</name>
    <name type="ORF">NCU00114</name>
</gene>
<name>RT10_NEUCR</name>
<proteinExistence type="evidence at protein level"/>
<comment type="function">
    <text evidence="5">Component of the mitochondrial ribosome (mitoribosome), a dedicated translation machinery responsible for the synthesis of mitochondrial genome-encoded proteins, including at least some of the essential transmembrane subunits of the mitochondrial respiratory chain. The mitoribosomes are attached to the mitochondrial inner membrane and translation products are cotranslationally integrated into the membrane.</text>
</comment>
<comment type="subunit">
    <text evidence="2">Component of the mitochondrial small ribosomal subunit (mt-SSU). Mature N.crassa 74S mitochondrial ribosomes consist of a small (37S) and a large (54S) subunit. The 37S small subunit contains a 16S ribosomal RNA (16S mt-rRNA) and 32 different proteins. The 54S large subunit contains a 23S rRNA (23S mt-rRNA) and 42 different proteins.</text>
</comment>
<comment type="subcellular location">
    <subcellularLocation>
        <location evidence="2">Mitochondrion</location>
    </subcellularLocation>
</comment>
<comment type="similarity">
    <text evidence="4">Belongs to the universal ribosomal protein uS10 family.</text>
</comment>
<accession>Q7RYL4</accession>
<reference key="1">
    <citation type="journal article" date="2003" name="Nature">
        <title>The genome sequence of the filamentous fungus Neurospora crassa.</title>
        <authorList>
            <person name="Galagan J.E."/>
            <person name="Calvo S.E."/>
            <person name="Borkovich K.A."/>
            <person name="Selker E.U."/>
            <person name="Read N.D."/>
            <person name="Jaffe D.B."/>
            <person name="FitzHugh W."/>
            <person name="Ma L.-J."/>
            <person name="Smirnov S."/>
            <person name="Purcell S."/>
            <person name="Rehman B."/>
            <person name="Elkins T."/>
            <person name="Engels R."/>
            <person name="Wang S."/>
            <person name="Nielsen C.B."/>
            <person name="Butler J."/>
            <person name="Endrizzi M."/>
            <person name="Qui D."/>
            <person name="Ianakiev P."/>
            <person name="Bell-Pedersen D."/>
            <person name="Nelson M.A."/>
            <person name="Werner-Washburne M."/>
            <person name="Selitrennikoff C.P."/>
            <person name="Kinsey J.A."/>
            <person name="Braun E.L."/>
            <person name="Zelter A."/>
            <person name="Schulte U."/>
            <person name="Kothe G.O."/>
            <person name="Jedd G."/>
            <person name="Mewes H.-W."/>
            <person name="Staben C."/>
            <person name="Marcotte E."/>
            <person name="Greenberg D."/>
            <person name="Roy A."/>
            <person name="Foley K."/>
            <person name="Naylor J."/>
            <person name="Stange-Thomann N."/>
            <person name="Barrett R."/>
            <person name="Gnerre S."/>
            <person name="Kamal M."/>
            <person name="Kamvysselis M."/>
            <person name="Mauceli E.W."/>
            <person name="Bielke C."/>
            <person name="Rudd S."/>
            <person name="Frishman D."/>
            <person name="Krystofova S."/>
            <person name="Rasmussen C."/>
            <person name="Metzenberg R.L."/>
            <person name="Perkins D.D."/>
            <person name="Kroken S."/>
            <person name="Cogoni C."/>
            <person name="Macino G."/>
            <person name="Catcheside D.E.A."/>
            <person name="Li W."/>
            <person name="Pratt R.J."/>
            <person name="Osmani S.A."/>
            <person name="DeSouza C.P.C."/>
            <person name="Glass N.L."/>
            <person name="Orbach M.J."/>
            <person name="Berglund J.A."/>
            <person name="Voelker R."/>
            <person name="Yarden O."/>
            <person name="Plamann M."/>
            <person name="Seiler S."/>
            <person name="Dunlap J.C."/>
            <person name="Radford A."/>
            <person name="Aramayo R."/>
            <person name="Natvig D.O."/>
            <person name="Alex L.A."/>
            <person name="Mannhaupt G."/>
            <person name="Ebbole D.J."/>
            <person name="Freitag M."/>
            <person name="Paulsen I."/>
            <person name="Sachs M.S."/>
            <person name="Lander E.S."/>
            <person name="Nusbaum C."/>
            <person name="Birren B.W."/>
        </authorList>
    </citation>
    <scope>NUCLEOTIDE SEQUENCE [LARGE SCALE GENOMIC DNA]</scope>
    <source>
        <strain>ATCC 24698 / 74-OR23-1A / CBS 708.71 / DSM 1257 / FGSC 987</strain>
    </source>
</reference>
<reference evidence="6 7" key="2">
    <citation type="journal article" date="2020" name="Nat. Commun.">
        <title>Analysis of translating mitoribosome reveals functional characteristics of translation in mitochondria of fungi.</title>
        <authorList>
            <person name="Itoh Y."/>
            <person name="Naschberger A."/>
            <person name="Mortezaei N."/>
            <person name="Herrmann J.M."/>
            <person name="Amunts A."/>
        </authorList>
    </citation>
    <scope>STRUCTURE BY ELECTRON MICROSCOPY (2.85 ANGSTROMS)</scope>
</reference>
<protein>
    <recommendedName>
        <fullName evidence="3">Small ribosomal subunit protein uS10m</fullName>
    </recommendedName>
    <alternativeName>
        <fullName>37S ribosomal protein S10, mitochondrial</fullName>
    </alternativeName>
    <alternativeName>
        <fullName>Mitochondrial ribosomal small subunit protein 10</fullName>
    </alternativeName>
</protein>